<dbReference type="EMBL" id="AL645847">
    <property type="status" value="NOT_ANNOTATED_CDS"/>
    <property type="molecule type" value="Genomic_DNA"/>
</dbReference>
<dbReference type="EMBL" id="BC085108">
    <property type="protein sequence ID" value="AAH85108.1"/>
    <property type="molecule type" value="mRNA"/>
</dbReference>
<dbReference type="SMR" id="Q5SUS0"/>
<dbReference type="IntAct" id="Q5SUS0">
    <property type="interactions" value="1"/>
</dbReference>
<dbReference type="STRING" id="10090.ENSMUSP00000135870"/>
<dbReference type="iPTMnet" id="Q5SUS0"/>
<dbReference type="PhosphoSitePlus" id="Q5SUS0"/>
<dbReference type="PaxDb" id="10090-ENSMUSP00000046156"/>
<dbReference type="ProteomicsDB" id="267345">
    <molecule id="Q5SUS0-1"/>
</dbReference>
<dbReference type="Ensembl" id="ENSMUST00000036085.11">
    <molecule id="Q5SUS0-1"/>
    <property type="protein sequence ID" value="ENSMUSP00000046156.5"/>
    <property type="gene ID" value="ENSMUSG00000090173.9"/>
</dbReference>
<dbReference type="UCSC" id="uc007jke.3">
    <molecule id="Q5SUS0-2"/>
    <property type="organism name" value="mouse"/>
</dbReference>
<dbReference type="UCSC" id="uc007jkf.2">
    <molecule id="Q5SUS0-1"/>
    <property type="organism name" value="mouse"/>
</dbReference>
<dbReference type="AGR" id="MGI:3052463"/>
<dbReference type="MGI" id="MGI:3052463">
    <property type="gene designation" value="Fbxw10"/>
</dbReference>
<dbReference type="VEuPathDB" id="HostDB:ENSMUSG00000090173"/>
<dbReference type="eggNOG" id="KOG0274">
    <property type="taxonomic scope" value="Eukaryota"/>
</dbReference>
<dbReference type="GeneTree" id="ENSGT00940000158003"/>
<dbReference type="InParanoid" id="Q5SUS0"/>
<dbReference type="OrthoDB" id="674604at2759"/>
<dbReference type="PhylomeDB" id="Q5SUS0"/>
<dbReference type="TreeFam" id="TF329175"/>
<dbReference type="Reactome" id="R-MMU-8951664">
    <property type="pathway name" value="Neddylation"/>
</dbReference>
<dbReference type="Reactome" id="R-MMU-983168">
    <property type="pathway name" value="Antigen processing: Ubiquitination &amp; Proteasome degradation"/>
</dbReference>
<dbReference type="PRO" id="PR:Q5SUS0"/>
<dbReference type="Proteomes" id="UP000000589">
    <property type="component" value="Chromosome 11"/>
</dbReference>
<dbReference type="RNAct" id="Q5SUS0">
    <property type="molecule type" value="protein"/>
</dbReference>
<dbReference type="Bgee" id="ENSMUSG00000090173">
    <property type="expression patterns" value="Expressed in seminiferous tubule of testis and 51 other cell types or tissues"/>
</dbReference>
<dbReference type="ExpressionAtlas" id="Q5SUS0">
    <property type="expression patterns" value="baseline and differential"/>
</dbReference>
<dbReference type="GO" id="GO:0006954">
    <property type="term" value="P:inflammatory response"/>
    <property type="evidence" value="ECO:0000315"/>
    <property type="project" value="MGI"/>
</dbReference>
<dbReference type="GO" id="GO:0009611">
    <property type="term" value="P:response to wounding"/>
    <property type="evidence" value="ECO:0000315"/>
    <property type="project" value="MGI"/>
</dbReference>
<dbReference type="GO" id="GO:0042246">
    <property type="term" value="P:tissue regeneration"/>
    <property type="evidence" value="ECO:0000315"/>
    <property type="project" value="MGI"/>
</dbReference>
<dbReference type="CDD" id="cd22136">
    <property type="entry name" value="F-box_FBXW10"/>
    <property type="match status" value="1"/>
</dbReference>
<dbReference type="CDD" id="cd00200">
    <property type="entry name" value="WD40"/>
    <property type="match status" value="1"/>
</dbReference>
<dbReference type="Gene3D" id="1.20.1280.50">
    <property type="match status" value="1"/>
</dbReference>
<dbReference type="Gene3D" id="2.130.10.10">
    <property type="entry name" value="YVTN repeat-like/Quinoprotein amine dehydrogenase"/>
    <property type="match status" value="1"/>
</dbReference>
<dbReference type="InterPro" id="IPR036047">
    <property type="entry name" value="F-box-like_dom_sf"/>
</dbReference>
<dbReference type="InterPro" id="IPR001810">
    <property type="entry name" value="F-box_dom"/>
</dbReference>
<dbReference type="InterPro" id="IPR020472">
    <property type="entry name" value="G-protein_beta_WD-40_rep"/>
</dbReference>
<dbReference type="InterPro" id="IPR051075">
    <property type="entry name" value="SCF_subunit_WD-repeat"/>
</dbReference>
<dbReference type="InterPro" id="IPR015943">
    <property type="entry name" value="WD40/YVTN_repeat-like_dom_sf"/>
</dbReference>
<dbReference type="InterPro" id="IPR036322">
    <property type="entry name" value="WD40_repeat_dom_sf"/>
</dbReference>
<dbReference type="InterPro" id="IPR001680">
    <property type="entry name" value="WD40_rpt"/>
</dbReference>
<dbReference type="PANTHER" id="PTHR19872:SF7">
    <property type="entry name" value="F-BOX AND WD REPEAT DOMAIN CONTAINING PROTEIN 10B-RELATED"/>
    <property type="match status" value="1"/>
</dbReference>
<dbReference type="PANTHER" id="PTHR19872">
    <property type="entry name" value="UBIQUITIN LIGASE SPECIFICITY FACTOR/HREP PROTEIN"/>
    <property type="match status" value="1"/>
</dbReference>
<dbReference type="Pfam" id="PF00646">
    <property type="entry name" value="F-box"/>
    <property type="match status" value="1"/>
</dbReference>
<dbReference type="Pfam" id="PF00400">
    <property type="entry name" value="WD40"/>
    <property type="match status" value="3"/>
</dbReference>
<dbReference type="PRINTS" id="PR00320">
    <property type="entry name" value="GPROTEINBRPT"/>
</dbReference>
<dbReference type="SMART" id="SM00320">
    <property type="entry name" value="WD40"/>
    <property type="match status" value="5"/>
</dbReference>
<dbReference type="SUPFAM" id="SSF81383">
    <property type="entry name" value="F-box domain"/>
    <property type="match status" value="1"/>
</dbReference>
<dbReference type="SUPFAM" id="SSF50978">
    <property type="entry name" value="WD40 repeat-like"/>
    <property type="match status" value="1"/>
</dbReference>
<dbReference type="PROSITE" id="PS50082">
    <property type="entry name" value="WD_REPEATS_2"/>
    <property type="match status" value="3"/>
</dbReference>
<dbReference type="PROSITE" id="PS50294">
    <property type="entry name" value="WD_REPEATS_REGION"/>
    <property type="match status" value="1"/>
</dbReference>
<protein>
    <recommendedName>
        <fullName>F-box/WD repeat-containing protein 10</fullName>
    </recommendedName>
    <alternativeName>
        <fullName>F-box and WD-40 domain-containing protein 10</fullName>
    </alternativeName>
</protein>
<reference key="1">
    <citation type="journal article" date="2009" name="PLoS Biol.">
        <title>Lineage-specific biology revealed by a finished genome assembly of the mouse.</title>
        <authorList>
            <person name="Church D.M."/>
            <person name="Goodstadt L."/>
            <person name="Hillier L.W."/>
            <person name="Zody M.C."/>
            <person name="Goldstein S."/>
            <person name="She X."/>
            <person name="Bult C.J."/>
            <person name="Agarwala R."/>
            <person name="Cherry J.L."/>
            <person name="DiCuccio M."/>
            <person name="Hlavina W."/>
            <person name="Kapustin Y."/>
            <person name="Meric P."/>
            <person name="Maglott D."/>
            <person name="Birtle Z."/>
            <person name="Marques A.C."/>
            <person name="Graves T."/>
            <person name="Zhou S."/>
            <person name="Teague B."/>
            <person name="Potamousis K."/>
            <person name="Churas C."/>
            <person name="Place M."/>
            <person name="Herschleb J."/>
            <person name="Runnheim R."/>
            <person name="Forrest D."/>
            <person name="Amos-Landgraf J."/>
            <person name="Schwartz D.C."/>
            <person name="Cheng Z."/>
            <person name="Lindblad-Toh K."/>
            <person name="Eichler E.E."/>
            <person name="Ponting C.P."/>
        </authorList>
    </citation>
    <scope>NUCLEOTIDE SEQUENCE [LARGE SCALE GENOMIC DNA]</scope>
    <source>
        <strain>C57BL/6J</strain>
    </source>
</reference>
<reference key="2">
    <citation type="journal article" date="2004" name="Genome Res.">
        <title>The status, quality, and expansion of the NIH full-length cDNA project: the Mammalian Gene Collection (MGC).</title>
        <authorList>
            <consortium name="The MGC Project Team"/>
        </authorList>
    </citation>
    <scope>NUCLEOTIDE SEQUENCE [LARGE SCALE MRNA] (ISOFORM 2)</scope>
    <source>
        <strain>C57BL/6NCr</strain>
        <tissue>Hematopoietic stem cell</tissue>
    </source>
</reference>
<comment type="function">
    <text evidence="1">Probable substrate-recognition component of a SCF (SKP1-CUL1-F-box protein)-type E3 ubiquitin ligase complex which mediates the ubiquitination and subsequent proteasomal degradation of target proteins. Overexpression is leading to degradation of CBX5 and CBX1 (By similarity).</text>
</comment>
<comment type="alternative products">
    <event type="alternative splicing"/>
    <isoform>
        <id>Q5SUS0-1</id>
        <name>1</name>
        <sequence type="displayed"/>
    </isoform>
    <isoform>
        <id>Q5SUS0-2</id>
        <name>2</name>
        <sequence type="described" ref="VSP_030730 VSP_030731"/>
    </isoform>
</comment>
<organism>
    <name type="scientific">Mus musculus</name>
    <name type="common">Mouse</name>
    <dbReference type="NCBI Taxonomy" id="10090"/>
    <lineage>
        <taxon>Eukaryota</taxon>
        <taxon>Metazoa</taxon>
        <taxon>Chordata</taxon>
        <taxon>Craniata</taxon>
        <taxon>Vertebrata</taxon>
        <taxon>Euteleostomi</taxon>
        <taxon>Mammalia</taxon>
        <taxon>Eutheria</taxon>
        <taxon>Euarchontoglires</taxon>
        <taxon>Glires</taxon>
        <taxon>Rodentia</taxon>
        <taxon>Myomorpha</taxon>
        <taxon>Muroidea</taxon>
        <taxon>Muridae</taxon>
        <taxon>Murinae</taxon>
        <taxon>Mus</taxon>
        <taxon>Mus</taxon>
    </lineage>
</organism>
<feature type="chain" id="PRO_0000315835" description="F-box/WD repeat-containing protein 10">
    <location>
        <begin position="1"/>
        <end position="1030"/>
    </location>
</feature>
<feature type="domain" description="F-box">
    <location>
        <begin position="280"/>
        <end position="329"/>
    </location>
</feature>
<feature type="repeat" description="WD 1">
    <location>
        <begin position="466"/>
        <end position="505"/>
    </location>
</feature>
<feature type="repeat" description="WD 2">
    <location>
        <begin position="508"/>
        <end position="547"/>
    </location>
</feature>
<feature type="repeat" description="WD 3">
    <location>
        <begin position="549"/>
        <end position="584"/>
    </location>
</feature>
<feature type="repeat" description="WD 4">
    <location>
        <begin position="587"/>
        <end position="624"/>
    </location>
</feature>
<feature type="repeat" description="WD 5">
    <location>
        <begin position="626"/>
        <end position="667"/>
    </location>
</feature>
<feature type="region of interest" description="Disordered" evidence="3">
    <location>
        <begin position="709"/>
        <end position="773"/>
    </location>
</feature>
<feature type="coiled-coil region" evidence="2">
    <location>
        <begin position="963"/>
        <end position="992"/>
    </location>
</feature>
<feature type="compositionally biased region" description="Basic and acidic residues" evidence="3">
    <location>
        <begin position="716"/>
        <end position="733"/>
    </location>
</feature>
<feature type="compositionally biased region" description="Polar residues" evidence="3">
    <location>
        <begin position="734"/>
        <end position="749"/>
    </location>
</feature>
<feature type="splice variant" id="VSP_030730" description="In isoform 2." evidence="4">
    <original>EGKGESSLQCIHEMNRQIFGKGGMSRLGDDPCNLLLSLDHVQLLSS</original>
    <variation>GKSGSMKTSDIALGELGGSPYSLKKKKKSFCWVFCDLMASYINSLT</variation>
    <location>
        <begin position="229"/>
        <end position="274"/>
    </location>
</feature>
<feature type="splice variant" id="VSP_030731" description="In isoform 2." evidence="4">
    <location>
        <begin position="275"/>
        <end position="1030"/>
    </location>
</feature>
<feature type="sequence conflict" description="In Ref. 2; AAH85108." evidence="5" ref="2">
    <original>A</original>
    <variation>T</variation>
    <location>
        <position position="155"/>
    </location>
</feature>
<keyword id="KW-0025">Alternative splicing</keyword>
<keyword id="KW-0175">Coiled coil</keyword>
<keyword id="KW-1185">Reference proteome</keyword>
<keyword id="KW-0677">Repeat</keyword>
<keyword id="KW-0833">Ubl conjugation pathway</keyword>
<keyword id="KW-0853">WD repeat</keyword>
<accession>Q5SUS0</accession>
<accession>Q5U4G1</accession>
<proteinExistence type="evidence at transcript level"/>
<sequence length="1030" mass="117691">MENREPKLKQAPYFRCEKGPNWVPVCQKCEACVLAWKIFATKEWFRRVNDISQRRFLVSILGQLNSLYLLQYFQNILETTQGKDFIYNRSRIKLSRKGGKEEEVVKSSLNQMLDKTVERKMKEILYWFGNSTHRTKANYTLLLLQMCDSNLLLTAANVIRVLFMKEWNSISGLHDDTPDVMFFPEKKYSGTQDTSYVSWAARPKPVSFPMSKHLGNKLGTENVDRETTEGKGESSLQCIHEMNRQIFGKGGMSRLGDDPCNLLLSLDHVQLLSSGYSKYRDFIRDLPLHLSKYILRMLDKHSLNRCIFVSQHWATLAQQVKVDQSMHSFIQNQISLLQVTKEEKQAYTGSYTRGIDPNYANKVSIPVPKIVDDGKRSRSKNQKWKLRTKTDYNLWNAYQNQETQLVQMEERNVFCGTYNIRVLSDTFDQNRIIHYNGGDLMAISSNRKIHLLDIMQTKELPIEFRGHAGSVRALFLSEEDNILLSGSYDLSIRYWDVKTGACVRIFYGHQGTITCLDVYKNRLVSGAKDGQVKEWDIETGKCLKTFKHKDPILAAKISETYIVSSCERGIVKVWHVVTAQLQKTLTGHEGAVKCLFFNEWHLVSGGADGLVMAWSMVGKYERCLMAFKHPKEVLQVSLLYLRVISACGDGKIRIYNFLNGNCLKVIKVDARGDPVLSFFYQGNRMVAHTDSNILVFQFENVKWQYSSDKNKVKKSKDKEEEREETSLGDEHSRSTIQGHSLKDSVSSKQEFSKSRVHLKQTKNLSSDDMETPVGEVSHPLQKLWKVPMTPDRFLLTISALQQAHNSEEFAYPHRPRPQVIDAWGPSIPYPRKVLSLKGKSVQHAVDQLRSSNLPTGVRQTNIPLEIQKLQPNLKKSLHSPRVQATVPQPSLIRPKVSDSLRGDEHLTSSIDGTMRRAGPLTSMQVIKPNRMLAPRGGTATLSPKKERPRFYTTLDPLRMNTGFMLMTVKEEKEFAEAKMKEYEASVSTKEVDPGKASKAAWIRKIKGLPIDNFMKEGKTAAPELGQNVFI</sequence>
<gene>
    <name type="primary">Fbxw10</name>
</gene>
<name>FBW10_MOUSE</name>
<evidence type="ECO:0000250" key="1"/>
<evidence type="ECO:0000255" key="2"/>
<evidence type="ECO:0000256" key="3">
    <source>
        <dbReference type="SAM" id="MobiDB-lite"/>
    </source>
</evidence>
<evidence type="ECO:0000303" key="4">
    <source>
    </source>
</evidence>
<evidence type="ECO:0000305" key="5"/>